<organism>
    <name type="scientific">Scolopendra alternans</name>
    <name type="common">Florida Keys giant centipede</name>
    <dbReference type="NCBI Taxonomy" id="1329349"/>
    <lineage>
        <taxon>Eukaryota</taxon>
        <taxon>Metazoa</taxon>
        <taxon>Ecdysozoa</taxon>
        <taxon>Arthropoda</taxon>
        <taxon>Myriapoda</taxon>
        <taxon>Chilopoda</taxon>
        <taxon>Pleurostigmophora</taxon>
        <taxon>Scolopendromorpha</taxon>
        <taxon>Scolopendridae</taxon>
        <taxon>Scolopendra</taxon>
    </lineage>
</organism>
<feature type="signal peptide" evidence="1">
    <location>
        <begin position="1"/>
        <end position="23"/>
    </location>
</feature>
<feature type="chain" id="PRO_0000446755" description="U-scoloptoxin(10)-Sa2a" evidence="3">
    <location>
        <begin position="24"/>
        <end position="97"/>
    </location>
</feature>
<feature type="unsure residue" evidence="4">
    <location>
        <position position="4"/>
    </location>
</feature>
<reference key="1">
    <citation type="journal article" date="2014" name="Mol. Biol. Evol.">
        <title>Clawing through evolution: toxin diversification and convergence in the ancient lineage Chilopoda (centipedes).</title>
        <authorList>
            <person name="Undheim E.A."/>
            <person name="Jones A."/>
            <person name="Clauser K.R."/>
            <person name="Holland J.W."/>
            <person name="Pineda S.S."/>
            <person name="King G.F."/>
            <person name="Fry B.G."/>
        </authorList>
    </citation>
    <scope>NUCLEOTIDE SEQUENCE [MRNA]</scope>
    <scope>NOMENCLATURE</scope>
    <source>
        <tissue>Venom gland</tissue>
    </source>
</reference>
<accession>P0DPY8</accession>
<evidence type="ECO:0000255" key="1"/>
<evidence type="ECO:0000303" key="2">
    <source>
    </source>
</evidence>
<evidence type="ECO:0000305" key="3"/>
<evidence type="ECO:0000305" key="4">
    <source>
    </source>
</evidence>
<keyword id="KW-1015">Disulfide bond</keyword>
<keyword id="KW-0964">Secreted</keyword>
<keyword id="KW-0732">Signal</keyword>
<keyword id="KW-0800">Toxin</keyword>
<protein>
    <recommendedName>
        <fullName evidence="2">U-scoloptoxin(10)-Sa2a</fullName>
        <shortName evidence="2">U-SLPTX(10)-Sa2a</shortName>
    </recommendedName>
</protein>
<comment type="subcellular location">
    <subcellularLocation>
        <location evidence="4">Secreted</location>
    </subcellularLocation>
</comment>
<comment type="tissue specificity">
    <text evidence="4">Expressed by the venom gland.</text>
</comment>
<comment type="PTM">
    <text evidence="3">Contains 3 disulfide bonds.</text>
</comment>
<comment type="similarity">
    <text evidence="3">Belongs to the scoloptoxin-10 family.</text>
</comment>
<comment type="caution">
    <text evidence="4">All S.alternans family members described in 'Undeheim et al., 2014' have not been imported into UniProtKB. Please, refer to this paper to access them.</text>
</comment>
<comment type="online information" name="National Center for Biotechnology Information (NCBI)">
    <link uri="https://www.ncbi.nlm.nih.gov/nuccore/GASK01000031"/>
</comment>
<sequence length="97" mass="11084">MNKSMLIFFTILFLTYIIEEKEALKVEDLPEPESYKRAKQLALKDAKGDKNAETIALNFLKQNRRDCMKNCKLVPTCALLSPECCPDKTDVCKKLAL</sequence>
<proteinExistence type="inferred from homology"/>
<name>TXA2A_SCOAL</name>
<dbReference type="SMR" id="P0DPY8"/>
<dbReference type="GO" id="GO:0005576">
    <property type="term" value="C:extracellular region"/>
    <property type="evidence" value="ECO:0007669"/>
    <property type="project" value="UniProtKB-SubCell"/>
</dbReference>
<dbReference type="GO" id="GO:0090729">
    <property type="term" value="F:toxin activity"/>
    <property type="evidence" value="ECO:0007669"/>
    <property type="project" value="UniProtKB-KW"/>
</dbReference>